<reference key="1">
    <citation type="journal article" date="2004" name="Proc. Natl. Acad. Sci. U.S.A.">
        <title>The diploid genome sequence of Candida albicans.</title>
        <authorList>
            <person name="Jones T."/>
            <person name="Federspiel N.A."/>
            <person name="Chibana H."/>
            <person name="Dungan J."/>
            <person name="Kalman S."/>
            <person name="Magee B.B."/>
            <person name="Newport G."/>
            <person name="Thorstenson Y.R."/>
            <person name="Agabian N."/>
            <person name="Magee P.T."/>
            <person name="Davis R.W."/>
            <person name="Scherer S."/>
        </authorList>
    </citation>
    <scope>NUCLEOTIDE SEQUENCE [LARGE SCALE GENOMIC DNA]</scope>
    <source>
        <strain>SC5314 / ATCC MYA-2876</strain>
    </source>
</reference>
<reference key="2">
    <citation type="journal article" date="2007" name="Genome Biol.">
        <title>Assembly of the Candida albicans genome into sixteen supercontigs aligned on the eight chromosomes.</title>
        <authorList>
            <person name="van het Hoog M."/>
            <person name="Rast T.J."/>
            <person name="Martchenko M."/>
            <person name="Grindle S."/>
            <person name="Dignard D."/>
            <person name="Hogues H."/>
            <person name="Cuomo C."/>
            <person name="Berriman M."/>
            <person name="Scherer S."/>
            <person name="Magee B.B."/>
            <person name="Whiteway M."/>
            <person name="Chibana H."/>
            <person name="Nantel A."/>
            <person name="Magee P.T."/>
        </authorList>
    </citation>
    <scope>GENOME REANNOTATION</scope>
    <source>
        <strain>SC5314 / ATCC MYA-2876</strain>
    </source>
</reference>
<reference key="3">
    <citation type="journal article" date="2013" name="Genome Biol.">
        <title>Assembly of a phased diploid Candida albicans genome facilitates allele-specific measurements and provides a simple model for repeat and indel structure.</title>
        <authorList>
            <person name="Muzzey D."/>
            <person name="Schwartz K."/>
            <person name="Weissman J.S."/>
            <person name="Sherlock G."/>
        </authorList>
    </citation>
    <scope>NUCLEOTIDE SEQUENCE [LARGE SCALE GENOMIC DNA]</scope>
    <scope>GENOME REANNOTATION</scope>
    <source>
        <strain>SC5314 / ATCC MYA-2876</strain>
    </source>
</reference>
<reference key="4">
    <citation type="journal article" date="2003" name="Yeast">
        <title>Genome-wide identification of fungal GPI proteins.</title>
        <authorList>
            <person name="De Groot P.W."/>
            <person name="Hellingwerf K.J."/>
            <person name="Klis F.M."/>
        </authorList>
    </citation>
    <scope>PREDICTION OF GPI-ANCHOR</scope>
</reference>
<reference key="5">
    <citation type="journal article" date="2004" name="Mol. Microbiol.">
        <title>Regulatory networks affected by iron availability in Candida albicans.</title>
        <authorList>
            <person name="Lan C.Y."/>
            <person name="Rodarte G."/>
            <person name="Murillo L.A."/>
            <person name="Jones T."/>
            <person name="Davis R.W."/>
            <person name="Dungan J."/>
            <person name="Newport G."/>
            <person name="Agabian N."/>
        </authorList>
    </citation>
    <scope>INDUCTION</scope>
</reference>
<reference key="6">
    <citation type="journal article" date="2007" name="Infect. Immun.">
        <title>Candida albicans Iff11, a secreted protein required for cell wall structure and virulence.</title>
        <authorList>
            <person name="Bates S."/>
            <person name="de la Rosa J.M."/>
            <person name="MacCallum D.M."/>
            <person name="Brown A.J."/>
            <person name="Gow N.A."/>
            <person name="Odds F.C."/>
        </authorList>
    </citation>
    <scope>IDENTIFICATION IN THE HYR1/IFF FAMILY</scope>
</reference>
<reference key="7">
    <citation type="journal article" date="2011" name="Eukaryot. Cell">
        <title>Unexpected role for a serine/threonine-rich domain in the Candida albicans Iff protein family.</title>
        <authorList>
            <person name="Boisrame A."/>
            <person name="Cornu A."/>
            <person name="Da Costa G."/>
            <person name="Richard M.L."/>
        </authorList>
    </citation>
    <scope>SUBCELLULAR LOCATION</scope>
</reference>
<accession>Q59XA7</accession>
<accession>A0A1D8PN06</accession>
<feature type="signal peptide" evidence="2">
    <location>
        <begin position="1"/>
        <end position="20"/>
    </location>
</feature>
<feature type="chain" id="PRO_0000424754" description="Hyphally regulated cell wall protein 3">
    <location>
        <begin position="21"/>
        <end position="1225"/>
    </location>
</feature>
<feature type="propeptide" id="PRO_0000424755" description="Removed in mature form" evidence="2">
    <location>
        <begin position="1226"/>
        <end position="1249"/>
    </location>
</feature>
<feature type="region of interest" description="Disordered" evidence="3">
    <location>
        <begin position="383"/>
        <end position="729"/>
    </location>
</feature>
<feature type="region of interest" description="Disordered" evidence="3">
    <location>
        <begin position="883"/>
        <end position="1217"/>
    </location>
</feature>
<feature type="compositionally biased region" description="Low complexity" evidence="3">
    <location>
        <begin position="383"/>
        <end position="415"/>
    </location>
</feature>
<feature type="compositionally biased region" description="Polar residues" evidence="3">
    <location>
        <begin position="416"/>
        <end position="428"/>
    </location>
</feature>
<feature type="compositionally biased region" description="Low complexity" evidence="3">
    <location>
        <begin position="429"/>
        <end position="716"/>
    </location>
</feature>
<feature type="compositionally biased region" description="Polar residues" evidence="3">
    <location>
        <begin position="717"/>
        <end position="729"/>
    </location>
</feature>
<feature type="compositionally biased region" description="Polar residues" evidence="3">
    <location>
        <begin position="883"/>
        <end position="935"/>
    </location>
</feature>
<feature type="compositionally biased region" description="Low complexity" evidence="3">
    <location>
        <begin position="941"/>
        <end position="959"/>
    </location>
</feature>
<feature type="compositionally biased region" description="Gly residues" evidence="3">
    <location>
        <begin position="960"/>
        <end position="982"/>
    </location>
</feature>
<feature type="compositionally biased region" description="Low complexity" evidence="3">
    <location>
        <begin position="983"/>
        <end position="1043"/>
    </location>
</feature>
<feature type="compositionally biased region" description="Gly residues" evidence="3">
    <location>
        <begin position="1062"/>
        <end position="1078"/>
    </location>
</feature>
<feature type="compositionally biased region" description="Low complexity" evidence="3">
    <location>
        <begin position="1079"/>
        <end position="1097"/>
    </location>
</feature>
<feature type="compositionally biased region" description="Low complexity" evidence="3">
    <location>
        <begin position="1139"/>
        <end position="1167"/>
    </location>
</feature>
<feature type="compositionally biased region" description="Low complexity" evidence="3">
    <location>
        <begin position="1175"/>
        <end position="1194"/>
    </location>
</feature>
<feature type="compositionally biased region" description="Low complexity" evidence="3">
    <location>
        <begin position="1205"/>
        <end position="1217"/>
    </location>
</feature>
<feature type="lipid moiety-binding region" description="GPI-anchor amidated asparagine" evidence="2">
    <location>
        <position position="1225"/>
    </location>
</feature>
<feature type="glycosylation site" description="N-linked (GlcNAc...) asparagine" evidence="2">
    <location>
        <position position="373"/>
    </location>
</feature>
<feature type="glycosylation site" description="N-linked (GlcNAc...) asparagine" evidence="2">
    <location>
        <position position="681"/>
    </location>
</feature>
<feature type="glycosylation site" description="N-linked (GlcNAc...) asparagine" evidence="2">
    <location>
        <position position="891"/>
    </location>
</feature>
<feature type="glycosylation site" description="N-linked (GlcNAc...) asparagine" evidence="2">
    <location>
        <position position="940"/>
    </location>
</feature>
<feature type="glycosylation site" description="N-linked (GlcNAc...) asparagine" evidence="2">
    <location>
        <position position="944"/>
    </location>
</feature>
<feature type="glycosylation site" description="N-linked (GlcNAc...) asparagine" evidence="2">
    <location>
        <position position="948"/>
    </location>
</feature>
<feature type="glycosylation site" description="N-linked (GlcNAc...) asparagine" evidence="2">
    <location>
        <position position="952"/>
    </location>
</feature>
<feature type="glycosylation site" description="N-linked (GlcNAc...) asparagine" evidence="2">
    <location>
        <position position="956"/>
    </location>
</feature>
<feature type="glycosylation site" description="N-linked (GlcNAc...) asparagine" evidence="2">
    <location>
        <position position="960"/>
    </location>
</feature>
<feature type="glycosylation site" description="N-linked (GlcNAc...) asparagine" evidence="2">
    <location>
        <position position="966"/>
    </location>
</feature>
<feature type="glycosylation site" description="N-linked (GlcNAc...) asparagine" evidence="2">
    <location>
        <position position="970"/>
    </location>
</feature>
<feature type="glycosylation site" description="N-linked (GlcNAc...) asparagine" evidence="2">
    <location>
        <position position="974"/>
    </location>
</feature>
<feature type="glycosylation site" description="N-linked (GlcNAc...) asparagine" evidence="2">
    <location>
        <position position="984"/>
    </location>
</feature>
<feature type="glycosylation site" description="N-linked (GlcNAc...) asparagine" evidence="2">
    <location>
        <position position="988"/>
    </location>
</feature>
<feature type="glycosylation site" description="N-linked (GlcNAc...) asparagine" evidence="2">
    <location>
        <position position="992"/>
    </location>
</feature>
<feature type="glycosylation site" description="N-linked (GlcNAc...) asparagine" evidence="2">
    <location>
        <position position="996"/>
    </location>
</feature>
<feature type="glycosylation site" description="N-linked (GlcNAc...) asparagine" evidence="2">
    <location>
        <position position="1000"/>
    </location>
</feature>
<feature type="glycosylation site" description="N-linked (GlcNAc...) asparagine" evidence="2">
    <location>
        <position position="1010"/>
    </location>
</feature>
<feature type="glycosylation site" description="N-linked (GlcNAc...) asparagine" evidence="2">
    <location>
        <position position="1014"/>
    </location>
</feature>
<feature type="glycosylation site" description="N-linked (GlcNAc...) asparagine" evidence="2">
    <location>
        <position position="1018"/>
    </location>
</feature>
<feature type="glycosylation site" description="N-linked (GlcNAc...) asparagine" evidence="2">
    <location>
        <position position="1022"/>
    </location>
</feature>
<feature type="glycosylation site" description="N-linked (GlcNAc...) asparagine" evidence="2">
    <location>
        <position position="1026"/>
    </location>
</feature>
<feature type="glycosylation site" description="N-linked (GlcNAc...) asparagine" evidence="2">
    <location>
        <position position="1032"/>
    </location>
</feature>
<feature type="glycosylation site" description="N-linked (GlcNAc...) asparagine" evidence="2">
    <location>
        <position position="1046"/>
    </location>
</feature>
<feature type="glycosylation site" description="N-linked (GlcNAc...) asparagine" evidence="2">
    <location>
        <position position="1050"/>
    </location>
</feature>
<feature type="glycosylation site" description="N-linked (GlcNAc...) asparagine" evidence="2">
    <location>
        <position position="1058"/>
    </location>
</feature>
<feature type="glycosylation site" description="N-linked (GlcNAc...) asparagine" evidence="2">
    <location>
        <position position="1062"/>
    </location>
</feature>
<feature type="glycosylation site" description="N-linked (GlcNAc...) asparagine" evidence="2">
    <location>
        <position position="1072"/>
    </location>
</feature>
<feature type="glycosylation site" description="N-linked (GlcNAc...) asparagine" evidence="2">
    <location>
        <position position="1076"/>
    </location>
</feature>
<feature type="glycosylation site" description="N-linked (GlcNAc...) asparagine" evidence="2">
    <location>
        <position position="1080"/>
    </location>
</feature>
<feature type="glycosylation site" description="N-linked (GlcNAc...) asparagine" evidence="2">
    <location>
        <position position="1086"/>
    </location>
</feature>
<feature type="glycosylation site" description="N-linked (GlcNAc...) asparagine" evidence="2">
    <location>
        <position position="1090"/>
    </location>
</feature>
<feature type="glycosylation site" description="N-linked (GlcNAc...) asparagine" evidence="2">
    <location>
        <position position="1094"/>
    </location>
</feature>
<feature type="glycosylation site" description="N-linked (GlcNAc...) asparagine" evidence="2">
    <location>
        <position position="1098"/>
    </location>
</feature>
<feature type="glycosylation site" description="N-linked (GlcNAc...) asparagine" evidence="2">
    <location>
        <position position="1114"/>
    </location>
</feature>
<feature type="glycosylation site" description="N-linked (GlcNAc...) asparagine" evidence="2">
    <location>
        <position position="1118"/>
    </location>
</feature>
<feature type="glycosylation site" description="N-linked (GlcNAc...) asparagine" evidence="2">
    <location>
        <position position="1122"/>
    </location>
</feature>
<feature type="glycosylation site" description="N-linked (GlcNAc...) asparagine" evidence="2">
    <location>
        <position position="1128"/>
    </location>
</feature>
<feature type="glycosylation site" description="N-linked (GlcNAc...) asparagine" evidence="2">
    <location>
        <position position="1132"/>
    </location>
</feature>
<feature type="glycosylation site" description="N-linked (GlcNAc...) asparagine" evidence="2">
    <location>
        <position position="1136"/>
    </location>
</feature>
<feature type="glycosylation site" description="N-linked (GlcNAc...) asparagine" evidence="2">
    <location>
        <position position="1140"/>
    </location>
</feature>
<feature type="glycosylation site" description="N-linked (GlcNAc...) asparagine" evidence="2">
    <location>
        <position position="1150"/>
    </location>
</feature>
<feature type="glycosylation site" description="N-linked (GlcNAc...) asparagine" evidence="2">
    <location>
        <position position="1154"/>
    </location>
</feature>
<feature type="glycosylation site" description="N-linked (GlcNAc...) asparagine" evidence="2">
    <location>
        <position position="1158"/>
    </location>
</feature>
<feature type="glycosylation site" description="N-linked (GlcNAc...) asparagine" evidence="2">
    <location>
        <position position="1172"/>
    </location>
</feature>
<feature type="glycosylation site" description="N-linked (GlcNAc...) asparagine" evidence="2">
    <location>
        <position position="1180"/>
    </location>
</feature>
<feature type="glycosylation site" description="N-linked (GlcNAc...) asparagine" evidence="2">
    <location>
        <position position="1186"/>
    </location>
</feature>
<feature type="glycosylation site" description="N-linked (GlcNAc...) asparagine" evidence="2">
    <location>
        <position position="1225"/>
    </location>
</feature>
<protein>
    <recommendedName>
        <fullName>Hyphally regulated cell wall protein 3</fullName>
    </recommendedName>
    <alternativeName>
        <fullName>Adhesin-like protein HYR3</fullName>
    </alternativeName>
</protein>
<keyword id="KW-0134">Cell wall</keyword>
<keyword id="KW-0325">Glycoprotein</keyword>
<keyword id="KW-0336">GPI-anchor</keyword>
<keyword id="KW-0449">Lipoprotein</keyword>
<keyword id="KW-0472">Membrane</keyword>
<keyword id="KW-1185">Reference proteome</keyword>
<keyword id="KW-0964">Secreted</keyword>
<keyword id="KW-0732">Signal</keyword>
<keyword id="KW-0843">Virulence</keyword>
<organism>
    <name type="scientific">Candida albicans (strain SC5314 / ATCC MYA-2876)</name>
    <name type="common">Yeast</name>
    <dbReference type="NCBI Taxonomy" id="237561"/>
    <lineage>
        <taxon>Eukaryota</taxon>
        <taxon>Fungi</taxon>
        <taxon>Dikarya</taxon>
        <taxon>Ascomycota</taxon>
        <taxon>Saccharomycotina</taxon>
        <taxon>Pichiomycetes</taxon>
        <taxon>Debaryomycetaceae</taxon>
        <taxon>Candida/Lodderomyces clade</taxon>
        <taxon>Candida</taxon>
    </lineage>
</organism>
<proteinExistence type="evidence at protein level"/>
<gene>
    <name type="primary">HYR3</name>
    <name type="synonym">IFF2</name>
    <name type="ordered locus">CAALFM_C500730WA</name>
    <name type="ORF">CaO19.575</name>
    <name type="ORF">CaO19.8206</name>
</gene>
<evidence type="ECO:0000250" key="1"/>
<evidence type="ECO:0000255" key="2"/>
<evidence type="ECO:0000256" key="3">
    <source>
        <dbReference type="SAM" id="MobiDB-lite"/>
    </source>
</evidence>
<evidence type="ECO:0000269" key="4">
    <source>
    </source>
</evidence>
<evidence type="ECO:0000269" key="5">
    <source>
    </source>
</evidence>
<evidence type="ECO:0000305" key="6"/>
<sequence>MHLFKRIALTLWLIISSTLAVVITEDRVDRGTISVNLGEVTVNSGASWSIINNAVTAFAGKINVQSGGGLYISSTSPLLALQVTLTSLLDSITNDGVISLDSRASLTASNYNLIGLSFTNNGEMYLAASGVLPSTMDLTAASWTNNGLIVAYQNQRSSGVLNLGTPLGAITNNGQICLYNQVYQQQTRIEGSGCITANKNSAIYISNAVLPVATTQNFYLQDSKSSMIVQAVSSTQTFNVYGFGNGNKIGITLPAVGIPPNPAYSYDVDTGILTVRAGLLSQKFNIGLGYYSLFFSVVTDNGAGLPSTILGSISYSGPVPSRNLPASCKIACKPVPTAPGTNPTEYTTTITTTNSAGNPLTETGVVDISTDSNGSWFTTTSIFPTTSQSSSSETVASSSQPDSSSTEPSAFPSSTGDSSAEPSITSDYSSSELSVVPSSASESASESSAEPSSASESASESGSESVASETSASESASEQSSTSESVSSEFASSDSSSEPSSASESSVESSSASEFVVPSSATETSVSESASESSAEPSSASESVASESAVSETSASESAAPSSASETSVSESAASSSASESFASESSVESSAVPSSASEFSTSESVASETPASETPASETPASESASEQSSTSESSAEISSASESSAEPSSAKSAISESASEFSAAPSSASQSSASQSSTNESSSQQSSAESSSTGTSSVSASAATSEYTATWTTTNSDGSVSTESGIISQSGSSFTTITTFVPDATSEYTTTWTTTNSDGSVSTESGIVSQSGSSFTTITTFAPDATSEYTTTWTTTNSDGSVSTESGVVSQSGTSLTTITTFAPDVTSEYTTTWTTTNSDGSVSTESGIVSQSGSSFTTITTFEPPVVCKRDDVNCGSSIGLSTPYYGNSSQPLSSTKMTDTSATQTVDSSLSSITDATTTQSVNSLETPVPTSGSGNGSNNGSDNGSNNGSNNGSNNGSGSGNGSNNGSNNGSGSGNGFNNGSDNGSNNGSGNASNNGSASGSGSDNGSDNGSDNGSDNGSNNGSNTDNGSNSGSDSGNGIDNGSGNGSSDGSDNGTTNGSGSGGESNNGSGNGSDNGSSPDNGSNNGSNNGSNNGSGDGIGTGSNSDTDNGSGNGSNNGSGSVNGSANGSGNGSNNGSNSGSNSDNGSNNSSGNGSSSDLGSVSGTGNGSNEGSSNESGANNGSNNGAGALPAATLSVVPSPSADSGSTSSASAMVIPNTNGSGKLLNGKVLTLSVLSSMVVVFL</sequence>
<name>HYR3_CANAL</name>
<comment type="function">
    <text evidence="1">GPI-anchored cell wall protein involved in cell wall organization, hyphal growth, as well as in host-fungal interaction and virulence.</text>
</comment>
<comment type="subcellular location">
    <subcellularLocation>
        <location evidence="5">Secreted</location>
        <location evidence="5">Cell wall</location>
    </subcellularLocation>
    <subcellularLocation>
        <location evidence="6">Membrane</location>
        <topology evidence="6">Lipid-anchor</topology>
        <topology evidence="6">GPI-anchor</topology>
    </subcellularLocation>
</comment>
<comment type="induction">
    <text evidence="4">Induced in high iron conditions.</text>
</comment>
<comment type="PTM">
    <text>The GPI-anchor is attached to the protein in the endoplasmic reticulum and serves to target the protein to the cell surface. There, the glucosamine-inositol phospholipid moiety is cleaved off and the GPI-modified mannoprotein is covalently attached via its lipidless GPI glycan remnant to the 1,6-beta-glucan of the outer cell wall layer.</text>
</comment>
<comment type="similarity">
    <text evidence="6">Belongs to the HYR1/IFF family.</text>
</comment>
<dbReference type="EMBL" id="CP017627">
    <property type="protein sequence ID" value="AOW29515.1"/>
    <property type="molecule type" value="Genomic_DNA"/>
</dbReference>
<dbReference type="RefSeq" id="XP_714203.1">
    <property type="nucleotide sequence ID" value="XM_709110.2"/>
</dbReference>
<dbReference type="STRING" id="237561.Q59XA7"/>
<dbReference type="GlyCosmos" id="Q59XA7">
    <property type="glycosylation" value="48 sites, No reported glycans"/>
</dbReference>
<dbReference type="EnsemblFungi" id="C5_00730W_A-T">
    <property type="protein sequence ID" value="C5_00730W_A-T-p1"/>
    <property type="gene ID" value="C5_00730W_A"/>
</dbReference>
<dbReference type="GeneID" id="3644119"/>
<dbReference type="KEGG" id="cal:CAALFM_C500730WA"/>
<dbReference type="CGD" id="CAL0000179043">
    <property type="gene designation" value="HYR3"/>
</dbReference>
<dbReference type="VEuPathDB" id="FungiDB:C5_00730W_A"/>
<dbReference type="eggNOG" id="KOG1075">
    <property type="taxonomic scope" value="Eukaryota"/>
</dbReference>
<dbReference type="HOGENOM" id="CLU_006199_0_0_1"/>
<dbReference type="InParanoid" id="Q59XA7"/>
<dbReference type="OrthoDB" id="4022214at2759"/>
<dbReference type="PRO" id="PR:Q59XA7"/>
<dbReference type="Proteomes" id="UP000000559">
    <property type="component" value="Chromosome 5"/>
</dbReference>
<dbReference type="GO" id="GO:0009986">
    <property type="term" value="C:cell surface"/>
    <property type="evidence" value="ECO:0000314"/>
    <property type="project" value="CGD"/>
</dbReference>
<dbReference type="GO" id="GO:0005576">
    <property type="term" value="C:extracellular region"/>
    <property type="evidence" value="ECO:0007669"/>
    <property type="project" value="UniProtKB-KW"/>
</dbReference>
<dbReference type="GO" id="GO:0009277">
    <property type="term" value="C:fungal-type cell wall"/>
    <property type="evidence" value="ECO:0000314"/>
    <property type="project" value="CGD"/>
</dbReference>
<dbReference type="GO" id="GO:0098552">
    <property type="term" value="C:side of membrane"/>
    <property type="evidence" value="ECO:0007669"/>
    <property type="project" value="UniProtKB-KW"/>
</dbReference>
<dbReference type="InterPro" id="IPR031573">
    <property type="entry name" value="Cell_wall_rpt"/>
</dbReference>
<dbReference type="InterPro" id="IPR021031">
    <property type="entry name" value="Hyphal-reg_cell_wall_N"/>
</dbReference>
<dbReference type="PANTHER" id="PTHR40903">
    <property type="entry name" value="GLYCINE-RICH CELL WALL STRUCTURAL PROTEIN 1-LIKE"/>
    <property type="match status" value="1"/>
</dbReference>
<dbReference type="PANTHER" id="PTHR40903:SF1">
    <property type="entry name" value="HYPHALLY REGULATED CELL WALL PROTEIN 3"/>
    <property type="match status" value="1"/>
</dbReference>
<dbReference type="Pfam" id="PF11765">
    <property type="entry name" value="Hyphal_reg_CWP"/>
    <property type="match status" value="1"/>
</dbReference>
<dbReference type="Pfam" id="PF15789">
    <property type="entry name" value="Hyr1"/>
    <property type="match status" value="5"/>
</dbReference>